<keyword id="KW-0204">Cytolysis</keyword>
<keyword id="KW-0354">Hemolysis</keyword>
<keyword id="KW-0472">Membrane</keyword>
<keyword id="KW-0166">Nematocyst</keyword>
<keyword id="KW-1185">Reference proteome</keyword>
<keyword id="KW-0964">Secreted</keyword>
<keyword id="KW-0732">Signal</keyword>
<keyword id="KW-1052">Target cell membrane</keyword>
<keyword id="KW-1053">Target membrane</keyword>
<keyword id="KW-0800">Toxin</keyword>
<keyword id="KW-0812">Transmembrane</keyword>
<reference key="1">
    <citation type="submission" date="2011-10" db="EMBL/GenBank/DDBJ databases">
        <title>WashU Hydra EST Project.</title>
        <authorList>
            <person name="Bode H."/>
            <person name="Blumberg B."/>
            <person name="Steele R."/>
            <person name="Wigge P."/>
            <person name="Gee L."/>
            <person name="Nguyen Q."/>
            <person name="Martinez D."/>
            <person name="Kibler D."/>
            <person name="Hampson S."/>
            <person name="Clifton S."/>
            <person name="Pape D."/>
            <person name="Marra M."/>
            <person name="Hillier L."/>
            <person name="Martin J."/>
            <person name="Wylie T."/>
            <person name="Dante M."/>
            <person name="Theising B."/>
            <person name="Bowers Y."/>
            <person name="Gibbons M."/>
            <person name="Ritter E."/>
            <person name="Bennett J."/>
            <person name="Ronko I."/>
            <person name="Tsagareishvili R."/>
            <person name="Maguire L."/>
            <person name="Kennedy S."/>
            <person name="Waterston R."/>
            <person name="Wilson R."/>
        </authorList>
    </citation>
    <scope>NUCLEOTIDE SEQUENCE [MRNA] OF 1-143</scope>
</reference>
<reference key="2">
    <citation type="journal article" date="2014" name="Toxicon">
        <title>Hydra actinoporin-like toxin-1, an unusual hemolysin from the nematocyst venom of Hydra magnipapillata which belongs to an extended gene family.</title>
        <authorList>
            <person name="Glasser E."/>
            <person name="Rachamim T."/>
            <person name="Aharonovich D."/>
            <person name="Sher D."/>
        </authorList>
    </citation>
    <scope>NUCLEOTIDE SEQUENCE [GENOMIC DNA] OF 15-157</scope>
</reference>
<reference key="3">
    <citation type="journal article" date="2019" name="Toxicon">
        <title>Expansion of Hydra actinoporin-like toxin (HALT) gene family: expression divergence and functional convergence evolved through gene duplication.</title>
        <authorList>
            <person name="Yap W.Y."/>
            <person name="Tan K.J.S.X."/>
            <person name="Hwang J.S."/>
        </authorList>
    </citation>
    <scope>NUCLEOTIDE SEQUENCE [MRNA]</scope>
    <scope>FUNCTION</scope>
    <scope>RECOMBINANT EXPRESSION</scope>
</reference>
<accession>A0A8B6XS44</accession>
<evidence type="ECO:0000250" key="1">
    <source>
        <dbReference type="UniProtKB" id="A0A8B7DWS6"/>
    </source>
</evidence>
<evidence type="ECO:0000250" key="2">
    <source>
        <dbReference type="UniProtKB" id="B9W5G6"/>
    </source>
</evidence>
<evidence type="ECO:0000250" key="3">
    <source>
        <dbReference type="UniProtKB" id="P07845"/>
    </source>
</evidence>
<evidence type="ECO:0000250" key="4">
    <source>
        <dbReference type="UniProtKB" id="P61914"/>
    </source>
</evidence>
<evidence type="ECO:0000269" key="5">
    <source>
    </source>
</evidence>
<evidence type="ECO:0000303" key="6">
    <source>
    </source>
</evidence>
<evidence type="ECO:0000303" key="7">
    <source>
    </source>
</evidence>
<evidence type="ECO:0000305" key="8"/>
<sequence>LEATVSRNKKYKFTMGNVVRSWKCTVENKSNKTLYADGSTPVSGSMATVLTDIAPGGTGVFLWEQSKGAARGAVGVVYYRYEDKILSLMASIPYDWHLYNAWANARVSNKKESFSNLYNGYDGAQQPTIAGNWGEVDGTKFFLTDKSHAEFNVIFSG</sequence>
<proteinExistence type="evidence at transcript level"/>
<name>ACTL3_HYDVU</name>
<comment type="function">
    <text evidence="1 2 5">Pore-forming protein that forms hydrophilic pores and causes cytolysis (PubMed:31513812). Compared to equinatoxin-2 (AC P61914), it reveals lower cytolysis activity (5-12-fold difference, tested on erythrocytes), a larger pore size (probably 2-3 nm) and different affinity to membrane lipids (100-fold lower affinity to sphingomyelin) (By similarity). Binds to the two sphingolipids, lysophosphatidic acid (LPA) and sphingosine-1-phosphate (S1P) (PubMed:31513812). Does not bind (or only weakly) to sulfatides (SFT) (PubMed:31513812). Shows cytolytic activity on HeLa cells, with a different potency than its paralogs (from most potent to less potent: HALT-4&gt;HALT-6~HALT-1&gt;HALT-3&gt;HALT-7&gt;HALT-2) (PubMed:31513812). Pore formation is a multi-step process that involves specific recognition of membrane lipid by a protein aromatic residues rich region, firm binding to the membrane (mainly driven by hydrophobic interactions) accompanied by the transfer of the N-terminal region to the lipid-water interface and finally pore formation after oligomerization of monomers (By similarity). In vitro, binds to the folate receptor alpha (FOLR1), a GPI-anchored membrane protein that plays a major role in the uptake of folate/folic acid into cells via endocytosis, suggesting a possible involvement of this receptor in the mechanism of HALT-1-induced cell lysis (By similarity). In vivo, does not cause visible paralysis in larvae of the blowfly Sarcophaga faculata, the most common arthropod prey of Hydra (By similarity).</text>
</comment>
<comment type="subunit">
    <text evidence="1 2">Octamer or nonamer in membranes (By similarity). Monomer in the soluble state (By similarity). In vitro, interacts with folate receptor alpha (of target organism) (By similarity).</text>
</comment>
<comment type="subcellular location">
    <subcellularLocation>
        <location evidence="2">Nematocyst</location>
    </subcellularLocation>
    <subcellularLocation>
        <location evidence="2">Secreted</location>
    </subcellularLocation>
    <subcellularLocation>
        <location evidence="2">Target cell membrane</location>
    </subcellularLocation>
    <text evidence="2">Forms an alpha-helical membrane channel in the prey.</text>
</comment>
<comment type="domain">
    <text evidence="4">Composed of a long N-terminal alpha-helix and a core region rich in beta-sheet structures. Before the pore formation, the alpha-helix binds the lipid membrane, partitions into the lipid-water interface and stabilizes the monomeric molecule on the membrane. Finally, it traverses the bilayer, thus forming the transmembrane pore.</text>
</comment>
<comment type="similarity">
    <text evidence="8">Belongs to the actinoporin family. HALT subfamily.</text>
</comment>
<protein>
    <recommendedName>
        <fullName evidence="6 7">Hydra actinoporin-like toxin 3</fullName>
        <shortName evidence="6 7">HALT-3</shortName>
    </recommendedName>
    <alternativeName>
        <fullName evidence="6">Alpha-pore-forming toxin</fullName>
        <shortName evidence="6">alpha-PFT</shortName>
    </alternativeName>
    <alternativeName>
        <fullName evidence="8">DELTA-hydritoxin-Hma1c</fullName>
        <shortName evidence="8">DELTA-HYTX-Hma1c</shortName>
    </alternativeName>
</protein>
<organism>
    <name type="scientific">Hydra vulgaris</name>
    <name type="common">Hydra</name>
    <name type="synonym">Hydra attenuata</name>
    <dbReference type="NCBI Taxonomy" id="6087"/>
    <lineage>
        <taxon>Eukaryota</taxon>
        <taxon>Metazoa</taxon>
        <taxon>Cnidaria</taxon>
        <taxon>Hydrozoa</taxon>
        <taxon>Hydroidolina</taxon>
        <taxon>Anthoathecata</taxon>
        <taxon>Aplanulata</taxon>
        <taxon>Hydridae</taxon>
        <taxon>Hydra</taxon>
    </lineage>
</organism>
<dbReference type="EMBL" id="DN815714">
    <property type="status" value="NOT_ANNOTATED_CDS"/>
    <property type="molecule type" value="mRNA"/>
</dbReference>
<dbReference type="SMR" id="A0A8B6XS44"/>
<dbReference type="EnsemblMetazoa" id="XM_002166243.4">
    <property type="protein sequence ID" value="XP_002166279.1"/>
    <property type="gene ID" value="LOC100208752"/>
</dbReference>
<dbReference type="EnsemblMetazoa" id="XM_047288162.1">
    <property type="protein sequence ID" value="XP_047144118.1"/>
    <property type="gene ID" value="LOC100208752"/>
</dbReference>
<dbReference type="Proteomes" id="UP000694840">
    <property type="component" value="Unplaced"/>
</dbReference>
<dbReference type="GO" id="GO:0005576">
    <property type="term" value="C:extracellular region"/>
    <property type="evidence" value="ECO:0007669"/>
    <property type="project" value="UniProtKB-SubCell"/>
</dbReference>
<dbReference type="GO" id="GO:0042151">
    <property type="term" value="C:nematocyst"/>
    <property type="evidence" value="ECO:0007669"/>
    <property type="project" value="UniProtKB-SubCell"/>
</dbReference>
<dbReference type="GO" id="GO:0044218">
    <property type="term" value="C:other organism cell membrane"/>
    <property type="evidence" value="ECO:0007669"/>
    <property type="project" value="UniProtKB-KW"/>
</dbReference>
<dbReference type="GO" id="GO:0046930">
    <property type="term" value="C:pore complex"/>
    <property type="evidence" value="ECO:0007669"/>
    <property type="project" value="InterPro"/>
</dbReference>
<dbReference type="GO" id="GO:0015267">
    <property type="term" value="F:channel activity"/>
    <property type="evidence" value="ECO:0007669"/>
    <property type="project" value="InterPro"/>
</dbReference>
<dbReference type="GO" id="GO:0090729">
    <property type="term" value="F:toxin activity"/>
    <property type="evidence" value="ECO:0007669"/>
    <property type="project" value="UniProtKB-KW"/>
</dbReference>
<dbReference type="GO" id="GO:0051715">
    <property type="term" value="P:cytolysis in another organism"/>
    <property type="evidence" value="ECO:0007669"/>
    <property type="project" value="InterPro"/>
</dbReference>
<dbReference type="GO" id="GO:0006812">
    <property type="term" value="P:monoatomic cation transport"/>
    <property type="evidence" value="ECO:0007669"/>
    <property type="project" value="InterPro"/>
</dbReference>
<dbReference type="GO" id="GO:0046931">
    <property type="term" value="P:pore complex assembly"/>
    <property type="evidence" value="ECO:0007669"/>
    <property type="project" value="InterPro"/>
</dbReference>
<dbReference type="Gene3D" id="2.60.270.20">
    <property type="entry name" value="Cytolysin/lectin"/>
    <property type="match status" value="1"/>
</dbReference>
<dbReference type="InterPro" id="IPR050677">
    <property type="entry name" value="Actinoporin_PFT"/>
</dbReference>
<dbReference type="InterPro" id="IPR009104">
    <property type="entry name" value="Anemon_actinoporin-like"/>
</dbReference>
<dbReference type="InterPro" id="IPR015926">
    <property type="entry name" value="Cytolysin/lectin"/>
</dbReference>
<dbReference type="PANTHER" id="PTHR40388">
    <property type="entry name" value="BRYOPORIN"/>
    <property type="match status" value="1"/>
</dbReference>
<dbReference type="PANTHER" id="PTHR40388:SF1">
    <property type="entry name" value="BRYOPORIN"/>
    <property type="match status" value="1"/>
</dbReference>
<dbReference type="Pfam" id="PF06369">
    <property type="entry name" value="Anemone_cytotox"/>
    <property type="match status" value="1"/>
</dbReference>
<dbReference type="SUPFAM" id="SSF63724">
    <property type="entry name" value="Cytolysin/lectin"/>
    <property type="match status" value="1"/>
</dbReference>
<feature type="signal peptide" evidence="8">
    <location>
        <begin position="1" status="less than"/>
        <end position="14"/>
    </location>
</feature>
<feature type="chain" id="PRO_0000456793" description="Hydra actinoporin-like toxin 3">
    <location>
        <begin position="15"/>
        <end position="157"/>
    </location>
</feature>
<feature type="short sequence motif" description="Cell attachment site" evidence="3">
    <location>
        <begin position="129"/>
        <end position="131"/>
    </location>
</feature>
<feature type="non-terminal residue">
    <location>
        <position position="1"/>
    </location>
</feature>